<dbReference type="EMBL" id="AP004243">
    <property type="status" value="NOT_ANNOTATED_CDS"/>
    <property type="molecule type" value="Genomic_DNA"/>
</dbReference>
<dbReference type="EMBL" id="KF455396">
    <property type="status" value="NOT_ANNOTATED_CDS"/>
    <property type="molecule type" value="Genomic_DNA"/>
</dbReference>
<dbReference type="EMBL" id="AB231761">
    <property type="protein sequence ID" value="BAE46897.1"/>
    <property type="molecule type" value="mRNA"/>
</dbReference>
<dbReference type="RefSeq" id="NP_001341400.1">
    <property type="nucleotide sequence ID" value="NM_001354471.3"/>
</dbReference>
<dbReference type="RefSeq" id="XP_011543722.1">
    <property type="nucleotide sequence ID" value="XM_011545420.2"/>
</dbReference>
<dbReference type="RefSeq" id="XP_011543723.1">
    <property type="nucleotide sequence ID" value="XM_011545421.2"/>
</dbReference>
<dbReference type="SMR" id="Q3C1V0"/>
<dbReference type="FunCoup" id="Q3C1V0">
    <property type="interactions" value="6"/>
</dbReference>
<dbReference type="STRING" id="9606.ENSP00000431607"/>
<dbReference type="iPTMnet" id="Q3C1V0"/>
<dbReference type="PhosphoSitePlus" id="Q3C1V0"/>
<dbReference type="BioMuta" id="ENSG00000214782"/>
<dbReference type="BioMuta" id="HGNC:37636"/>
<dbReference type="DMDM" id="300681243"/>
<dbReference type="PaxDb" id="9606-ENSP00000431607"/>
<dbReference type="ProteomicsDB" id="61681"/>
<dbReference type="Antibodypedia" id="50555">
    <property type="antibodies" value="5 antibodies from 5 providers"/>
</dbReference>
<dbReference type="Ensembl" id="ENST00000529108.6">
    <property type="protein sequence ID" value="ENSP00000431607.3"/>
    <property type="gene ID" value="ENSG00000214782.8"/>
</dbReference>
<dbReference type="GeneID" id="728588"/>
<dbReference type="MANE-Select" id="ENST00000529108.6">
    <property type="protein sequence ID" value="ENSP00000431607.3"/>
    <property type="RefSeq nucleotide sequence ID" value="NM_001354471.3"/>
    <property type="RefSeq protein sequence ID" value="NP_001341400.1"/>
</dbReference>
<dbReference type="UCSC" id="uc058bvj.1">
    <property type="organism name" value="human"/>
</dbReference>
<dbReference type="AGR" id="HGNC:37636"/>
<dbReference type="GeneCards" id="MS4A18"/>
<dbReference type="HGNC" id="HGNC:37636">
    <property type="gene designation" value="MS4A18"/>
</dbReference>
<dbReference type="HPA" id="ENSG00000214782">
    <property type="expression patterns" value="Group enriched (breast, intestine)"/>
</dbReference>
<dbReference type="neXtProt" id="NX_Q3C1V0"/>
<dbReference type="OpenTargets" id="ENSG00000214782"/>
<dbReference type="VEuPathDB" id="HostDB:ENSG00000214782"/>
<dbReference type="eggNOG" id="ENOG502RZ20">
    <property type="taxonomic scope" value="Eukaryota"/>
</dbReference>
<dbReference type="GeneTree" id="ENSGT00940000163489"/>
<dbReference type="HOGENOM" id="CLU_071067_0_0_1"/>
<dbReference type="InParanoid" id="Q3C1V0"/>
<dbReference type="OrthoDB" id="10071849at2759"/>
<dbReference type="PAN-GO" id="Q3C1V0">
    <property type="GO annotations" value="2 GO annotations based on evolutionary models"/>
</dbReference>
<dbReference type="PhylomeDB" id="Q3C1V0"/>
<dbReference type="TreeFam" id="TF335157"/>
<dbReference type="Pharos" id="Q3C1V0">
    <property type="development level" value="Tdark"/>
</dbReference>
<dbReference type="PRO" id="PR:Q3C1V0"/>
<dbReference type="Proteomes" id="UP000005640">
    <property type="component" value="Chromosome 11"/>
</dbReference>
<dbReference type="RNAct" id="Q3C1V0">
    <property type="molecule type" value="protein"/>
</dbReference>
<dbReference type="Bgee" id="ENSG00000214782">
    <property type="expression patterns" value="Expressed in duodenum and 12 other cell types or tissues"/>
</dbReference>
<dbReference type="ExpressionAtlas" id="Q3C1V0">
    <property type="expression patterns" value="baseline and differential"/>
</dbReference>
<dbReference type="GO" id="GO:0005886">
    <property type="term" value="C:plasma membrane"/>
    <property type="evidence" value="ECO:0000318"/>
    <property type="project" value="GO_Central"/>
</dbReference>
<dbReference type="GO" id="GO:0007166">
    <property type="term" value="P:cell surface receptor signaling pathway"/>
    <property type="evidence" value="ECO:0000318"/>
    <property type="project" value="GO_Central"/>
</dbReference>
<dbReference type="InterPro" id="IPR007237">
    <property type="entry name" value="CD20-like"/>
</dbReference>
<dbReference type="InterPro" id="IPR030417">
    <property type="entry name" value="MS4A"/>
</dbReference>
<dbReference type="PANTHER" id="PTHR23320:SF37">
    <property type="entry name" value="MEMBRANE-SPANNING 4-DOMAINS SUBFAMILY A MEMBER 18"/>
    <property type="match status" value="1"/>
</dbReference>
<dbReference type="PANTHER" id="PTHR23320">
    <property type="entry name" value="MEMBRANE-SPANNING 4-DOMAINS SUBFAMILY A MS4A -RELATED"/>
    <property type="match status" value="1"/>
</dbReference>
<dbReference type="Pfam" id="PF04103">
    <property type="entry name" value="CD20"/>
    <property type="match status" value="1"/>
</dbReference>
<feature type="chain" id="PRO_0000395340" description="Membrane-spanning 4-domains subfamily A member 18">
    <location>
        <begin position="1"/>
        <end position="398"/>
    </location>
</feature>
<feature type="transmembrane region" description="Helical" evidence="1">
    <location>
        <begin position="156"/>
        <end position="176"/>
    </location>
</feature>
<feature type="transmembrane region" description="Helical" evidence="1">
    <location>
        <begin position="178"/>
        <end position="198"/>
    </location>
</feature>
<feature type="transmembrane region" description="Helical" evidence="1">
    <location>
        <begin position="218"/>
        <end position="238"/>
    </location>
</feature>
<feature type="transmembrane region" description="Helical" evidence="1">
    <location>
        <begin position="251"/>
        <end position="271"/>
    </location>
</feature>
<feature type="region of interest" description="Disordered" evidence="2">
    <location>
        <begin position="316"/>
        <end position="346"/>
    </location>
</feature>
<feature type="compositionally biased region" description="Polar residues" evidence="2">
    <location>
        <begin position="319"/>
        <end position="331"/>
    </location>
</feature>
<feature type="compositionally biased region" description="Low complexity" evidence="2">
    <location>
        <begin position="332"/>
        <end position="346"/>
    </location>
</feature>
<gene>
    <name type="primary">MS4A18</name>
</gene>
<name>M4A18_HUMAN</name>
<protein>
    <recommendedName>
        <fullName>Membrane-spanning 4-domains subfamily A member 18</fullName>
    </recommendedName>
</protein>
<sequence length="398" mass="41990">MTEQVIGANSVPGIIAPDNVHVIQPSNPVASGNHLQPSEVTTYPISPKVIHCDTGRANLQNLLVVNQNSAAGVQSQPIGYQRQYPVGTASLQTVPGVIQYTQGTTNLQTWPGDLQNPLNANPGLTHTSNSSQWNTSFASFTSFNPKKFINEEVRTLGAIQILIGLTHIFSAINPVLYYYPFVTWLSGYPLWGGLSYIVSGSLSVWAAKDPSPCVVNSSISFNIISALFAFAGIFIIITDLSLYYVTTYSKAVSGGLLPFALLEFILTCVVSHFGCQATCCRQFENVAVIPTVFSFNPANTTTSPVNATTGPVNAATGPVSATNGPVNTTIHPVNTTTSPVNTTTSPVNVTTGPVNANIGPVNVTTGPVNTTTAPAKATTSCVNAIHTSNVPPNPRTKK</sequence>
<accession>Q3C1V0</accession>
<accession>H0YCH9</accession>
<keyword id="KW-0472">Membrane</keyword>
<keyword id="KW-1185">Reference proteome</keyword>
<keyword id="KW-0812">Transmembrane</keyword>
<keyword id="KW-1133">Transmembrane helix</keyword>
<proteinExistence type="evidence at transcript level"/>
<organism>
    <name type="scientific">Homo sapiens</name>
    <name type="common">Human</name>
    <dbReference type="NCBI Taxonomy" id="9606"/>
    <lineage>
        <taxon>Eukaryota</taxon>
        <taxon>Metazoa</taxon>
        <taxon>Chordata</taxon>
        <taxon>Craniata</taxon>
        <taxon>Vertebrata</taxon>
        <taxon>Euteleostomi</taxon>
        <taxon>Mammalia</taxon>
        <taxon>Eutheria</taxon>
        <taxon>Euarchontoglires</taxon>
        <taxon>Primates</taxon>
        <taxon>Haplorrhini</taxon>
        <taxon>Catarrhini</taxon>
        <taxon>Hominidae</taxon>
        <taxon>Homo</taxon>
    </lineage>
</organism>
<evidence type="ECO:0000255" key="1"/>
<evidence type="ECO:0000256" key="2">
    <source>
        <dbReference type="SAM" id="MobiDB-lite"/>
    </source>
</evidence>
<evidence type="ECO:0000305" key="3"/>
<reference key="1">
    <citation type="journal article" date="2006" name="Nature">
        <title>Human chromosome 11 DNA sequence and analysis including novel gene identification.</title>
        <authorList>
            <person name="Taylor T.D."/>
            <person name="Noguchi H."/>
            <person name="Totoki Y."/>
            <person name="Toyoda A."/>
            <person name="Kuroki Y."/>
            <person name="Dewar K."/>
            <person name="Lloyd C."/>
            <person name="Itoh T."/>
            <person name="Takeda T."/>
            <person name="Kim D.-W."/>
            <person name="She X."/>
            <person name="Barlow K.F."/>
            <person name="Bloom T."/>
            <person name="Bruford E."/>
            <person name="Chang J.L."/>
            <person name="Cuomo C.A."/>
            <person name="Eichler E."/>
            <person name="FitzGerald M.G."/>
            <person name="Jaffe D.B."/>
            <person name="LaButti K."/>
            <person name="Nicol R."/>
            <person name="Park H.-S."/>
            <person name="Seaman C."/>
            <person name="Sougnez C."/>
            <person name="Yang X."/>
            <person name="Zimmer A.R."/>
            <person name="Zody M.C."/>
            <person name="Birren B.W."/>
            <person name="Nusbaum C."/>
            <person name="Fujiyama A."/>
            <person name="Hattori M."/>
            <person name="Rogers J."/>
            <person name="Lander E.S."/>
            <person name="Sakaki Y."/>
        </authorList>
    </citation>
    <scope>NUCLEOTIDE SEQUENCE [LARGE SCALE GENOMIC DNA]</scope>
</reference>
<reference key="2">
    <citation type="submission" date="2005-08" db="EMBL/GenBank/DDBJ databases">
        <title>Identification of novel human genes predicted by combining multiple gene-finders.</title>
        <authorList>
            <person name="Totoki Y."/>
            <person name="Yada T."/>
            <person name="Sakaki Y."/>
            <person name="Takeda T."/>
        </authorList>
    </citation>
    <scope>NUCLEOTIDE SEQUENCE [LARGE SCALE MRNA] OF 182-228</scope>
</reference>
<comment type="subcellular location">
    <subcellularLocation>
        <location evidence="1">Membrane</location>
        <topology evidence="1">Multi-pass membrane protein</topology>
    </subcellularLocation>
</comment>
<comment type="similarity">
    <text evidence="3">Belongs to the MS4A family.</text>
</comment>